<protein>
    <recommendedName>
        <fullName evidence="1">Type III pantothenate kinase</fullName>
        <ecNumber evidence="1">2.7.1.33</ecNumber>
    </recommendedName>
    <alternativeName>
        <fullName evidence="1">PanK-III</fullName>
    </alternativeName>
    <alternativeName>
        <fullName evidence="1">Pantothenic acid kinase</fullName>
    </alternativeName>
</protein>
<organism>
    <name type="scientific">Mycobacterium leprae (strain Br4923)</name>
    <dbReference type="NCBI Taxonomy" id="561304"/>
    <lineage>
        <taxon>Bacteria</taxon>
        <taxon>Bacillati</taxon>
        <taxon>Actinomycetota</taxon>
        <taxon>Actinomycetes</taxon>
        <taxon>Mycobacteriales</taxon>
        <taxon>Mycobacteriaceae</taxon>
        <taxon>Mycobacterium</taxon>
    </lineage>
</organism>
<name>COAX_MYCLB</name>
<sequence length="274" mass="29421">MLLAIDVRNTHTVVGLLSGSKEHAKVVQQWRIRTESEVTADELALIIDGLIGDDSERLAGAAALSTVPSVLHEVRIMLDQYWPSVPHVLIEPGVRTGIPLLVDNPKEVGADRIVNCLAAFHKFGQAAIVVDFGSSICVDVVSAKGEFLGGAIAPGVQVSSDAAAARSAALRRVELARPRSVVGKNTVECMQAGVVFGFAGLVDGLVGRMRQDVEEFSGDLGNRVAVVATGHTAPLLLPELHTVDHYDRHLTLHGLRLVFERNREAQRGRLKTAR</sequence>
<gene>
    <name evidence="1" type="primary">coaX</name>
    <name type="ordered locus">MLBr00232</name>
</gene>
<comment type="function">
    <text evidence="1">Catalyzes the phosphorylation of pantothenate (Pan), the first step in CoA biosynthesis.</text>
</comment>
<comment type="catalytic activity">
    <reaction evidence="1">
        <text>(R)-pantothenate + ATP = (R)-4'-phosphopantothenate + ADP + H(+)</text>
        <dbReference type="Rhea" id="RHEA:16373"/>
        <dbReference type="ChEBI" id="CHEBI:10986"/>
        <dbReference type="ChEBI" id="CHEBI:15378"/>
        <dbReference type="ChEBI" id="CHEBI:29032"/>
        <dbReference type="ChEBI" id="CHEBI:30616"/>
        <dbReference type="ChEBI" id="CHEBI:456216"/>
        <dbReference type="EC" id="2.7.1.33"/>
    </reaction>
</comment>
<comment type="cofactor">
    <cofactor evidence="1">
        <name>NH4(+)</name>
        <dbReference type="ChEBI" id="CHEBI:28938"/>
    </cofactor>
    <cofactor evidence="1">
        <name>K(+)</name>
        <dbReference type="ChEBI" id="CHEBI:29103"/>
    </cofactor>
    <text evidence="1">A monovalent cation. Ammonium or potassium.</text>
</comment>
<comment type="pathway">
    <text evidence="1">Cofactor biosynthesis; coenzyme A biosynthesis; CoA from (R)-pantothenate: step 1/5.</text>
</comment>
<comment type="subunit">
    <text evidence="1">Homodimer.</text>
</comment>
<comment type="subcellular location">
    <subcellularLocation>
        <location evidence="1">Cytoplasm</location>
    </subcellularLocation>
</comment>
<comment type="similarity">
    <text evidence="1">Belongs to the type III pantothenate kinase family.</text>
</comment>
<proteinExistence type="inferred from homology"/>
<feature type="chain" id="PRO_1000165203" description="Type III pantothenate kinase">
    <location>
        <begin position="1"/>
        <end position="274"/>
    </location>
</feature>
<feature type="active site" description="Proton acceptor" evidence="1">
    <location>
        <position position="111"/>
    </location>
</feature>
<feature type="binding site" evidence="1">
    <location>
        <begin position="6"/>
        <end position="13"/>
    </location>
    <ligand>
        <name>ATP</name>
        <dbReference type="ChEBI" id="CHEBI:30616"/>
    </ligand>
</feature>
<feature type="binding site" evidence="1">
    <location>
        <begin position="109"/>
        <end position="112"/>
    </location>
    <ligand>
        <name>substrate</name>
    </ligand>
</feature>
<feature type="binding site" evidence="1">
    <location>
        <position position="131"/>
    </location>
    <ligand>
        <name>K(+)</name>
        <dbReference type="ChEBI" id="CHEBI:29103"/>
    </ligand>
</feature>
<feature type="binding site" evidence="1">
    <location>
        <position position="134"/>
    </location>
    <ligand>
        <name>ATP</name>
        <dbReference type="ChEBI" id="CHEBI:30616"/>
    </ligand>
</feature>
<feature type="binding site" evidence="1">
    <location>
        <position position="186"/>
    </location>
    <ligand>
        <name>substrate</name>
    </ligand>
</feature>
<evidence type="ECO:0000255" key="1">
    <source>
        <dbReference type="HAMAP-Rule" id="MF_01274"/>
    </source>
</evidence>
<reference key="1">
    <citation type="journal article" date="2009" name="Nat. Genet.">
        <title>Comparative genomic and phylogeographic analysis of Mycobacterium leprae.</title>
        <authorList>
            <person name="Monot M."/>
            <person name="Honore N."/>
            <person name="Garnier T."/>
            <person name="Zidane N."/>
            <person name="Sherafi D."/>
            <person name="Paniz-Mondolfi A."/>
            <person name="Matsuoka M."/>
            <person name="Taylor G.M."/>
            <person name="Donoghue H.D."/>
            <person name="Bouwman A."/>
            <person name="Mays S."/>
            <person name="Watson C."/>
            <person name="Lockwood D."/>
            <person name="Khamispour A."/>
            <person name="Dowlati Y."/>
            <person name="Jianping S."/>
            <person name="Rea T.H."/>
            <person name="Vera-Cabrera L."/>
            <person name="Stefani M.M."/>
            <person name="Banu S."/>
            <person name="Macdonald M."/>
            <person name="Sapkota B.R."/>
            <person name="Spencer J.S."/>
            <person name="Thomas J."/>
            <person name="Harshman K."/>
            <person name="Singh P."/>
            <person name="Busso P."/>
            <person name="Gattiker A."/>
            <person name="Rougemont J."/>
            <person name="Brennan P.J."/>
            <person name="Cole S.T."/>
        </authorList>
    </citation>
    <scope>NUCLEOTIDE SEQUENCE [LARGE SCALE GENOMIC DNA]</scope>
    <source>
        <strain>Br4923</strain>
    </source>
</reference>
<keyword id="KW-0067">ATP-binding</keyword>
<keyword id="KW-0173">Coenzyme A biosynthesis</keyword>
<keyword id="KW-0963">Cytoplasm</keyword>
<keyword id="KW-0418">Kinase</keyword>
<keyword id="KW-0479">Metal-binding</keyword>
<keyword id="KW-0547">Nucleotide-binding</keyword>
<keyword id="KW-0630">Potassium</keyword>
<keyword id="KW-0808">Transferase</keyword>
<accession>B8ZU51</accession>
<dbReference type="EC" id="2.7.1.33" evidence="1"/>
<dbReference type="EMBL" id="FM211192">
    <property type="protein sequence ID" value="CAR70325.1"/>
    <property type="molecule type" value="Genomic_DNA"/>
</dbReference>
<dbReference type="SMR" id="B8ZU51"/>
<dbReference type="KEGG" id="mlb:MLBr00232"/>
<dbReference type="HOGENOM" id="CLU_066627_1_0_11"/>
<dbReference type="UniPathway" id="UPA00241">
    <property type="reaction ID" value="UER00352"/>
</dbReference>
<dbReference type="Proteomes" id="UP000006900">
    <property type="component" value="Chromosome"/>
</dbReference>
<dbReference type="GO" id="GO:0005737">
    <property type="term" value="C:cytoplasm"/>
    <property type="evidence" value="ECO:0007669"/>
    <property type="project" value="UniProtKB-SubCell"/>
</dbReference>
<dbReference type="GO" id="GO:0005524">
    <property type="term" value="F:ATP binding"/>
    <property type="evidence" value="ECO:0007669"/>
    <property type="project" value="UniProtKB-UniRule"/>
</dbReference>
<dbReference type="GO" id="GO:0046872">
    <property type="term" value="F:metal ion binding"/>
    <property type="evidence" value="ECO:0007669"/>
    <property type="project" value="UniProtKB-KW"/>
</dbReference>
<dbReference type="GO" id="GO:0004594">
    <property type="term" value="F:pantothenate kinase activity"/>
    <property type="evidence" value="ECO:0007669"/>
    <property type="project" value="UniProtKB-UniRule"/>
</dbReference>
<dbReference type="GO" id="GO:0015937">
    <property type="term" value="P:coenzyme A biosynthetic process"/>
    <property type="evidence" value="ECO:0007669"/>
    <property type="project" value="UniProtKB-UniRule"/>
</dbReference>
<dbReference type="CDD" id="cd24015">
    <property type="entry name" value="ASKHA_NBD_PanK-III"/>
    <property type="match status" value="1"/>
</dbReference>
<dbReference type="Gene3D" id="3.30.420.40">
    <property type="match status" value="2"/>
</dbReference>
<dbReference type="HAMAP" id="MF_01274">
    <property type="entry name" value="Pantothen_kinase_3"/>
    <property type="match status" value="1"/>
</dbReference>
<dbReference type="InterPro" id="IPR043129">
    <property type="entry name" value="ATPase_NBD"/>
</dbReference>
<dbReference type="InterPro" id="IPR004619">
    <property type="entry name" value="Type_III_PanK"/>
</dbReference>
<dbReference type="NCBIfam" id="TIGR00671">
    <property type="entry name" value="baf"/>
    <property type="match status" value="1"/>
</dbReference>
<dbReference type="NCBIfam" id="NF009845">
    <property type="entry name" value="PRK13318.1-3"/>
    <property type="match status" value="1"/>
</dbReference>
<dbReference type="PANTHER" id="PTHR34265">
    <property type="entry name" value="TYPE III PANTOTHENATE KINASE"/>
    <property type="match status" value="1"/>
</dbReference>
<dbReference type="PANTHER" id="PTHR34265:SF1">
    <property type="entry name" value="TYPE III PANTOTHENATE KINASE"/>
    <property type="match status" value="1"/>
</dbReference>
<dbReference type="Pfam" id="PF03309">
    <property type="entry name" value="Pan_kinase"/>
    <property type="match status" value="1"/>
</dbReference>
<dbReference type="SUPFAM" id="SSF53067">
    <property type="entry name" value="Actin-like ATPase domain"/>
    <property type="match status" value="2"/>
</dbReference>